<comment type="catalytic activity">
    <reaction evidence="1">
        <text>(S)-2,3,4,5-tetrahydrodipicolinate + succinyl-CoA + H2O = (S)-2-succinylamino-6-oxoheptanedioate + CoA</text>
        <dbReference type="Rhea" id="RHEA:17325"/>
        <dbReference type="ChEBI" id="CHEBI:15377"/>
        <dbReference type="ChEBI" id="CHEBI:15685"/>
        <dbReference type="ChEBI" id="CHEBI:16845"/>
        <dbReference type="ChEBI" id="CHEBI:57287"/>
        <dbReference type="ChEBI" id="CHEBI:57292"/>
        <dbReference type="EC" id="2.3.1.117"/>
    </reaction>
</comment>
<comment type="pathway">
    <text evidence="1">Amino-acid biosynthesis; L-lysine biosynthesis via DAP pathway; LL-2,6-diaminopimelate from (S)-tetrahydrodipicolinate (succinylase route): step 1/3.</text>
</comment>
<comment type="subunit">
    <text evidence="1">Homotrimer.</text>
</comment>
<comment type="subcellular location">
    <subcellularLocation>
        <location evidence="1">Cytoplasm</location>
    </subcellularLocation>
</comment>
<comment type="similarity">
    <text evidence="1">Belongs to the transferase hexapeptide repeat family.</text>
</comment>
<organism>
    <name type="scientific">Acidovorax sp. (strain JS42)</name>
    <dbReference type="NCBI Taxonomy" id="232721"/>
    <lineage>
        <taxon>Bacteria</taxon>
        <taxon>Pseudomonadati</taxon>
        <taxon>Pseudomonadota</taxon>
        <taxon>Betaproteobacteria</taxon>
        <taxon>Burkholderiales</taxon>
        <taxon>Comamonadaceae</taxon>
        <taxon>Acidovorax</taxon>
    </lineage>
</organism>
<dbReference type="EC" id="2.3.1.117" evidence="1"/>
<dbReference type="EMBL" id="CP000539">
    <property type="protein sequence ID" value="ABM42243.1"/>
    <property type="molecule type" value="Genomic_DNA"/>
</dbReference>
<dbReference type="RefSeq" id="WP_011805310.1">
    <property type="nucleotide sequence ID" value="NZ_CP016278.1"/>
</dbReference>
<dbReference type="SMR" id="A1W7L8"/>
<dbReference type="STRING" id="232721.Ajs_2067"/>
<dbReference type="GeneID" id="84681326"/>
<dbReference type="KEGG" id="ajs:Ajs_2067"/>
<dbReference type="eggNOG" id="COG2171">
    <property type="taxonomic scope" value="Bacteria"/>
</dbReference>
<dbReference type="HOGENOM" id="CLU_050859_0_1_4"/>
<dbReference type="UniPathway" id="UPA00034">
    <property type="reaction ID" value="UER00019"/>
</dbReference>
<dbReference type="Proteomes" id="UP000000645">
    <property type="component" value="Chromosome"/>
</dbReference>
<dbReference type="GO" id="GO:0005737">
    <property type="term" value="C:cytoplasm"/>
    <property type="evidence" value="ECO:0007669"/>
    <property type="project" value="UniProtKB-SubCell"/>
</dbReference>
<dbReference type="GO" id="GO:0008666">
    <property type="term" value="F:2,3,4,5-tetrahydropyridine-2,6-dicarboxylate N-succinyltransferase activity"/>
    <property type="evidence" value="ECO:0007669"/>
    <property type="project" value="UniProtKB-UniRule"/>
</dbReference>
<dbReference type="GO" id="GO:0016779">
    <property type="term" value="F:nucleotidyltransferase activity"/>
    <property type="evidence" value="ECO:0007669"/>
    <property type="project" value="TreeGrafter"/>
</dbReference>
<dbReference type="GO" id="GO:0019877">
    <property type="term" value="P:diaminopimelate biosynthetic process"/>
    <property type="evidence" value="ECO:0007669"/>
    <property type="project" value="UniProtKB-UniRule"/>
</dbReference>
<dbReference type="GO" id="GO:0009089">
    <property type="term" value="P:lysine biosynthetic process via diaminopimelate"/>
    <property type="evidence" value="ECO:0007669"/>
    <property type="project" value="UniProtKB-UniRule"/>
</dbReference>
<dbReference type="CDD" id="cd03350">
    <property type="entry name" value="LbH_THP_succinylT"/>
    <property type="match status" value="1"/>
</dbReference>
<dbReference type="Gene3D" id="2.160.10.10">
    <property type="entry name" value="Hexapeptide repeat proteins"/>
    <property type="match status" value="1"/>
</dbReference>
<dbReference type="Gene3D" id="1.10.166.10">
    <property type="entry name" value="Tetrahydrodipicolinate-N-succinyltransferase, N-terminal domain"/>
    <property type="match status" value="1"/>
</dbReference>
<dbReference type="HAMAP" id="MF_00811">
    <property type="entry name" value="DapD"/>
    <property type="match status" value="1"/>
</dbReference>
<dbReference type="InterPro" id="IPR005664">
    <property type="entry name" value="DapD_Trfase_Hexpep_rpt_fam"/>
</dbReference>
<dbReference type="InterPro" id="IPR001451">
    <property type="entry name" value="Hexapep"/>
</dbReference>
<dbReference type="InterPro" id="IPR018357">
    <property type="entry name" value="Hexapep_transf_CS"/>
</dbReference>
<dbReference type="InterPro" id="IPR023180">
    <property type="entry name" value="THP_succinylTrfase_dom1"/>
</dbReference>
<dbReference type="InterPro" id="IPR037133">
    <property type="entry name" value="THP_succinylTrfase_N_sf"/>
</dbReference>
<dbReference type="InterPro" id="IPR011004">
    <property type="entry name" value="Trimer_LpxA-like_sf"/>
</dbReference>
<dbReference type="NCBIfam" id="TIGR00965">
    <property type="entry name" value="dapD"/>
    <property type="match status" value="1"/>
</dbReference>
<dbReference type="NCBIfam" id="NF008808">
    <property type="entry name" value="PRK11830.1"/>
    <property type="match status" value="1"/>
</dbReference>
<dbReference type="PANTHER" id="PTHR19136:SF52">
    <property type="entry name" value="2,3,4,5-TETRAHYDROPYRIDINE-2,6-DICARBOXYLATE N-SUCCINYLTRANSFERASE"/>
    <property type="match status" value="1"/>
</dbReference>
<dbReference type="PANTHER" id="PTHR19136">
    <property type="entry name" value="MOLYBDENUM COFACTOR GUANYLYLTRANSFERASE"/>
    <property type="match status" value="1"/>
</dbReference>
<dbReference type="Pfam" id="PF14602">
    <property type="entry name" value="Hexapep_2"/>
    <property type="match status" value="1"/>
</dbReference>
<dbReference type="Pfam" id="PF14805">
    <property type="entry name" value="THDPS_N_2"/>
    <property type="match status" value="1"/>
</dbReference>
<dbReference type="SUPFAM" id="SSF51161">
    <property type="entry name" value="Trimeric LpxA-like enzymes"/>
    <property type="match status" value="1"/>
</dbReference>
<dbReference type="PROSITE" id="PS00101">
    <property type="entry name" value="HEXAPEP_TRANSFERASES"/>
    <property type="match status" value="1"/>
</dbReference>
<evidence type="ECO:0000255" key="1">
    <source>
        <dbReference type="HAMAP-Rule" id="MF_00811"/>
    </source>
</evidence>
<proteinExistence type="inferred from homology"/>
<reference key="1">
    <citation type="submission" date="2006-12" db="EMBL/GenBank/DDBJ databases">
        <title>Complete sequence of chromosome 1 of Acidovorax sp. JS42.</title>
        <authorList>
            <person name="Copeland A."/>
            <person name="Lucas S."/>
            <person name="Lapidus A."/>
            <person name="Barry K."/>
            <person name="Detter J.C."/>
            <person name="Glavina del Rio T."/>
            <person name="Dalin E."/>
            <person name="Tice H."/>
            <person name="Pitluck S."/>
            <person name="Chertkov O."/>
            <person name="Brettin T."/>
            <person name="Bruce D."/>
            <person name="Han C."/>
            <person name="Tapia R."/>
            <person name="Gilna P."/>
            <person name="Schmutz J."/>
            <person name="Larimer F."/>
            <person name="Land M."/>
            <person name="Hauser L."/>
            <person name="Kyrpides N."/>
            <person name="Kim E."/>
            <person name="Stahl D."/>
            <person name="Richardson P."/>
        </authorList>
    </citation>
    <scope>NUCLEOTIDE SEQUENCE [LARGE SCALE GENOMIC DNA]</scope>
    <source>
        <strain>JS42</strain>
    </source>
</reference>
<accession>A1W7L8</accession>
<gene>
    <name evidence="1" type="primary">dapD</name>
    <name type="ordered locus">Ajs_2067</name>
</gene>
<sequence length="274" mass="29331">MTQQLQTLIDNAWDNRASLSPSAAPKEVVDAVEHVIAELNNGRLRVATREGVGQWTVHQWIKKAVLLSFRLKDNELMKAGDLGFFDKVPTKFAHLSADEMAATGVRVVPPAVARRGSFIAKGAILMPSYVNIGAYVDEGTMVDTWATVGSCAQVGKNVHLSGGVGLGGVLEPLQANPTIIEDNCFIGARSEVVEGVIVEENSVISMGVYIGQSTPIYDRTTGEITYGRVPAGSVVVSGNLPKDGGRYSMYAAIIVKKVDAKTRSTTSLNDLLRD</sequence>
<feature type="chain" id="PRO_1000047112" description="2,3,4,5-tetrahydropyridine-2,6-dicarboxylate N-succinyltransferase">
    <location>
        <begin position="1"/>
        <end position="274"/>
    </location>
</feature>
<feature type="binding site" evidence="1">
    <location>
        <position position="106"/>
    </location>
    <ligand>
        <name>substrate</name>
    </ligand>
</feature>
<feature type="binding site" evidence="1">
    <location>
        <position position="143"/>
    </location>
    <ligand>
        <name>substrate</name>
    </ligand>
</feature>
<keyword id="KW-0012">Acyltransferase</keyword>
<keyword id="KW-0028">Amino-acid biosynthesis</keyword>
<keyword id="KW-0963">Cytoplasm</keyword>
<keyword id="KW-0220">Diaminopimelate biosynthesis</keyword>
<keyword id="KW-0457">Lysine biosynthesis</keyword>
<keyword id="KW-0677">Repeat</keyword>
<keyword id="KW-0808">Transferase</keyword>
<protein>
    <recommendedName>
        <fullName evidence="1">2,3,4,5-tetrahydropyridine-2,6-dicarboxylate N-succinyltransferase</fullName>
        <ecNumber evidence="1">2.3.1.117</ecNumber>
    </recommendedName>
    <alternativeName>
        <fullName evidence="1">Tetrahydrodipicolinate N-succinyltransferase</fullName>
        <shortName evidence="1">THDP succinyltransferase</shortName>
        <shortName evidence="1">THP succinyltransferase</shortName>
        <shortName evidence="1">Tetrahydropicolinate succinylase</shortName>
    </alternativeName>
</protein>
<name>DAPD_ACISJ</name>